<proteinExistence type="inferred from homology"/>
<sequence>MIVKNLVLENYRNHTNTRILFSDRFNIFYGDNGQGKTNILEAIYLCASGRSHRTSRDSELIKFGCENFSIAVHVSKTGGLDKDIEISYYENQKKQIKINDIPIKKIGALMGNLYAVLFSPEDLFIVKQGPTERRRFVDITLSQIKPSYFYNLQQMSKILKQRNTLLKNISSNPKLMDTVDIWNMRLAEVAAAIIKARRTFSIMLSGMAENQHNFLTGKSEKISFDYRCSFQISGQDDTEQIEKLYLVQLEKSMQRDIVLGYTTVGPHRDDYDIMINDKSLKLYGSQGQQRSAVLSLKIAEIELVKKATNQYPVLLLDDVMSELDKNRQKYLMDSIKEVQTFITCTNKEHFGNLLSANSNFFKIVGGNIHSCM</sequence>
<keyword id="KW-0067">ATP-binding</keyword>
<keyword id="KW-0963">Cytoplasm</keyword>
<keyword id="KW-0227">DNA damage</keyword>
<keyword id="KW-0234">DNA repair</keyword>
<keyword id="KW-0235">DNA replication</keyword>
<keyword id="KW-0238">DNA-binding</keyword>
<keyword id="KW-0547">Nucleotide-binding</keyword>
<keyword id="KW-1185">Reference proteome</keyword>
<keyword id="KW-0742">SOS response</keyword>
<comment type="function">
    <text evidence="1">The RecF protein is involved in DNA metabolism; it is required for DNA replication and normal SOS inducibility. RecF binds preferentially to single-stranded, linear DNA. It also seems to bind ATP.</text>
</comment>
<comment type="subcellular location">
    <subcellularLocation>
        <location evidence="1">Cytoplasm</location>
    </subcellularLocation>
</comment>
<comment type="similarity">
    <text evidence="1">Belongs to the RecF family.</text>
</comment>
<evidence type="ECO:0000255" key="1">
    <source>
        <dbReference type="HAMAP-Rule" id="MF_00365"/>
    </source>
</evidence>
<name>RECF_RUMCH</name>
<reference key="1">
    <citation type="submission" date="2009-01" db="EMBL/GenBank/DDBJ databases">
        <title>Complete sequence of Clostridium cellulolyticum H10.</title>
        <authorList>
            <consortium name="US DOE Joint Genome Institute"/>
            <person name="Lucas S."/>
            <person name="Copeland A."/>
            <person name="Lapidus A."/>
            <person name="Glavina del Rio T."/>
            <person name="Dalin E."/>
            <person name="Tice H."/>
            <person name="Bruce D."/>
            <person name="Goodwin L."/>
            <person name="Pitluck S."/>
            <person name="Chertkov O."/>
            <person name="Saunders E."/>
            <person name="Brettin T."/>
            <person name="Detter J.C."/>
            <person name="Han C."/>
            <person name="Larimer F."/>
            <person name="Land M."/>
            <person name="Hauser L."/>
            <person name="Kyrpides N."/>
            <person name="Ivanova N."/>
            <person name="Zhou J."/>
            <person name="Richardson P."/>
        </authorList>
    </citation>
    <scope>NUCLEOTIDE SEQUENCE [LARGE SCALE GENOMIC DNA]</scope>
    <source>
        <strain>ATCC 35319 / DSM 5812 / JCM 6584 / H10</strain>
    </source>
</reference>
<protein>
    <recommendedName>
        <fullName evidence="1">DNA replication and repair protein RecF</fullName>
    </recommendedName>
</protein>
<organism>
    <name type="scientific">Ruminiclostridium cellulolyticum (strain ATCC 35319 / DSM 5812 / JCM 6584 / H10)</name>
    <name type="common">Clostridium cellulolyticum</name>
    <dbReference type="NCBI Taxonomy" id="394503"/>
    <lineage>
        <taxon>Bacteria</taxon>
        <taxon>Bacillati</taxon>
        <taxon>Bacillota</taxon>
        <taxon>Clostridia</taxon>
        <taxon>Eubacteriales</taxon>
        <taxon>Oscillospiraceae</taxon>
        <taxon>Ruminiclostridium</taxon>
    </lineage>
</organism>
<gene>
    <name evidence="1" type="primary">recF</name>
    <name type="ordered locus">Ccel_0004</name>
</gene>
<accession>B8I3R5</accession>
<feature type="chain" id="PRO_1000133681" description="DNA replication and repair protein RecF">
    <location>
        <begin position="1"/>
        <end position="372"/>
    </location>
</feature>
<feature type="binding site" evidence="1">
    <location>
        <begin position="30"/>
        <end position="37"/>
    </location>
    <ligand>
        <name>ATP</name>
        <dbReference type="ChEBI" id="CHEBI:30616"/>
    </ligand>
</feature>
<dbReference type="EMBL" id="CP001348">
    <property type="protein sequence ID" value="ACL74392.1"/>
    <property type="molecule type" value="Genomic_DNA"/>
</dbReference>
<dbReference type="RefSeq" id="WP_012634459.1">
    <property type="nucleotide sequence ID" value="NC_011898.1"/>
</dbReference>
<dbReference type="SMR" id="B8I3R5"/>
<dbReference type="STRING" id="394503.Ccel_0004"/>
<dbReference type="KEGG" id="cce:Ccel_0004"/>
<dbReference type="eggNOG" id="COG1195">
    <property type="taxonomic scope" value="Bacteria"/>
</dbReference>
<dbReference type="HOGENOM" id="CLU_040267_0_1_9"/>
<dbReference type="OrthoDB" id="9803889at2"/>
<dbReference type="Proteomes" id="UP000001349">
    <property type="component" value="Chromosome"/>
</dbReference>
<dbReference type="GO" id="GO:0005737">
    <property type="term" value="C:cytoplasm"/>
    <property type="evidence" value="ECO:0007669"/>
    <property type="project" value="UniProtKB-SubCell"/>
</dbReference>
<dbReference type="GO" id="GO:0005524">
    <property type="term" value="F:ATP binding"/>
    <property type="evidence" value="ECO:0007669"/>
    <property type="project" value="UniProtKB-UniRule"/>
</dbReference>
<dbReference type="GO" id="GO:0003697">
    <property type="term" value="F:single-stranded DNA binding"/>
    <property type="evidence" value="ECO:0007669"/>
    <property type="project" value="UniProtKB-UniRule"/>
</dbReference>
<dbReference type="GO" id="GO:0006260">
    <property type="term" value="P:DNA replication"/>
    <property type="evidence" value="ECO:0007669"/>
    <property type="project" value="UniProtKB-UniRule"/>
</dbReference>
<dbReference type="GO" id="GO:0000731">
    <property type="term" value="P:DNA synthesis involved in DNA repair"/>
    <property type="evidence" value="ECO:0007669"/>
    <property type="project" value="TreeGrafter"/>
</dbReference>
<dbReference type="GO" id="GO:0006302">
    <property type="term" value="P:double-strand break repair"/>
    <property type="evidence" value="ECO:0007669"/>
    <property type="project" value="TreeGrafter"/>
</dbReference>
<dbReference type="GO" id="GO:0009432">
    <property type="term" value="P:SOS response"/>
    <property type="evidence" value="ECO:0007669"/>
    <property type="project" value="UniProtKB-UniRule"/>
</dbReference>
<dbReference type="CDD" id="cd03242">
    <property type="entry name" value="ABC_RecF"/>
    <property type="match status" value="1"/>
</dbReference>
<dbReference type="Gene3D" id="3.40.50.300">
    <property type="entry name" value="P-loop containing nucleotide triphosphate hydrolases"/>
    <property type="match status" value="1"/>
</dbReference>
<dbReference type="Gene3D" id="1.20.1050.90">
    <property type="entry name" value="RecF/RecN/SMC, N-terminal domain"/>
    <property type="match status" value="1"/>
</dbReference>
<dbReference type="HAMAP" id="MF_00365">
    <property type="entry name" value="RecF"/>
    <property type="match status" value="1"/>
</dbReference>
<dbReference type="InterPro" id="IPR001238">
    <property type="entry name" value="DNA-binding_RecF"/>
</dbReference>
<dbReference type="InterPro" id="IPR018078">
    <property type="entry name" value="DNA-binding_RecF_CS"/>
</dbReference>
<dbReference type="InterPro" id="IPR027417">
    <property type="entry name" value="P-loop_NTPase"/>
</dbReference>
<dbReference type="InterPro" id="IPR003395">
    <property type="entry name" value="RecF/RecN/SMC_N"/>
</dbReference>
<dbReference type="InterPro" id="IPR042174">
    <property type="entry name" value="RecF_2"/>
</dbReference>
<dbReference type="NCBIfam" id="TIGR00611">
    <property type="entry name" value="recf"/>
    <property type="match status" value="1"/>
</dbReference>
<dbReference type="PANTHER" id="PTHR32182">
    <property type="entry name" value="DNA REPLICATION AND REPAIR PROTEIN RECF"/>
    <property type="match status" value="1"/>
</dbReference>
<dbReference type="PANTHER" id="PTHR32182:SF0">
    <property type="entry name" value="DNA REPLICATION AND REPAIR PROTEIN RECF"/>
    <property type="match status" value="1"/>
</dbReference>
<dbReference type="Pfam" id="PF02463">
    <property type="entry name" value="SMC_N"/>
    <property type="match status" value="1"/>
</dbReference>
<dbReference type="SUPFAM" id="SSF52540">
    <property type="entry name" value="P-loop containing nucleoside triphosphate hydrolases"/>
    <property type="match status" value="1"/>
</dbReference>
<dbReference type="PROSITE" id="PS00618">
    <property type="entry name" value="RECF_2"/>
    <property type="match status" value="1"/>
</dbReference>